<accession>Q9USH1</accession>
<keyword id="KW-0002">3D-structure</keyword>
<keyword id="KW-0010">Activator</keyword>
<keyword id="KW-0539">Nucleus</keyword>
<keyword id="KW-1185">Reference proteome</keyword>
<keyword id="KW-0804">Transcription</keyword>
<keyword id="KW-0805">Transcription regulation</keyword>
<name>MED31_SCHPO</name>
<protein>
    <recommendedName>
        <fullName>Mediator of RNA polymerase II transcription subunit 31</fullName>
    </recommendedName>
    <alternativeName>
        <fullName>Cell separation protein sep10</fullName>
    </alternativeName>
    <alternativeName>
        <fullName>Mediator complex subunit 31</fullName>
    </alternativeName>
    <alternativeName>
        <fullName>Soh1 homolog</fullName>
    </alternativeName>
</protein>
<sequence length="139" mass="16896">METKWLLSKVPDDKSRFEIELEFVQMLSNPWYLNFLAQHKYFEDEAFLQYLEYMEYWREPEYVKFIIYPTCLHMLTLLKNPQFRNDISRADLSKQVNDEIYYEWLGKGLQQYGSADDATLSQPQQEEDEKKVDVKKENE</sequence>
<organism>
    <name type="scientific">Schizosaccharomyces pombe (strain 972 / ATCC 24843)</name>
    <name type="common">Fission yeast</name>
    <dbReference type="NCBI Taxonomy" id="284812"/>
    <lineage>
        <taxon>Eukaryota</taxon>
        <taxon>Fungi</taxon>
        <taxon>Dikarya</taxon>
        <taxon>Ascomycota</taxon>
        <taxon>Taphrinomycotina</taxon>
        <taxon>Schizosaccharomycetes</taxon>
        <taxon>Schizosaccharomycetales</taxon>
        <taxon>Schizosaccharomycetaceae</taxon>
        <taxon>Schizosaccharomyces</taxon>
    </lineage>
</organism>
<feature type="chain" id="PRO_0000212533" description="Mediator of RNA polymerase II transcription subunit 31">
    <location>
        <begin position="1"/>
        <end position="139"/>
    </location>
</feature>
<feature type="region of interest" description="Disordered" evidence="2">
    <location>
        <begin position="115"/>
        <end position="139"/>
    </location>
</feature>
<feature type="compositionally biased region" description="Basic and acidic residues" evidence="2">
    <location>
        <begin position="128"/>
        <end position="139"/>
    </location>
</feature>
<feature type="helix" evidence="4">
    <location>
        <begin position="13"/>
        <end position="28"/>
    </location>
</feature>
<feature type="helix" evidence="4">
    <location>
        <begin position="30"/>
        <end position="38"/>
    </location>
</feature>
<feature type="helix" evidence="4">
    <location>
        <begin position="41"/>
        <end position="43"/>
    </location>
</feature>
<feature type="helix" evidence="4">
    <location>
        <begin position="45"/>
        <end position="54"/>
    </location>
</feature>
<feature type="helix" evidence="4">
    <location>
        <begin position="55"/>
        <end position="58"/>
    </location>
</feature>
<feature type="helix" evidence="4">
    <location>
        <begin position="60"/>
        <end position="63"/>
    </location>
</feature>
<feature type="helix" evidence="4">
    <location>
        <begin position="70"/>
        <end position="78"/>
    </location>
</feature>
<feature type="helix" evidence="4">
    <location>
        <begin position="81"/>
        <end position="88"/>
    </location>
</feature>
<feature type="helix" evidence="4">
    <location>
        <begin position="90"/>
        <end position="103"/>
    </location>
</feature>
<proteinExistence type="evidence at protein level"/>
<dbReference type="EMBL" id="AF284581">
    <property type="protein sequence ID" value="AAG02413.1"/>
    <property type="molecule type" value="Genomic_DNA"/>
</dbReference>
<dbReference type="EMBL" id="CU329672">
    <property type="protein sequence ID" value="CAB58369.1"/>
    <property type="molecule type" value="Genomic_DNA"/>
</dbReference>
<dbReference type="PIR" id="T41693">
    <property type="entry name" value="T41693"/>
</dbReference>
<dbReference type="RefSeq" id="NP_587859.1">
    <property type="nucleotide sequence ID" value="NM_001022852.2"/>
</dbReference>
<dbReference type="PDB" id="5N9J">
    <property type="method" value="X-ray"/>
    <property type="resolution" value="3.40 A"/>
    <property type="chains" value="R=1-139"/>
</dbReference>
<dbReference type="PDB" id="5U0P">
    <property type="method" value="EM"/>
    <property type="resolution" value="4.40 A"/>
    <property type="chains" value="3=1-139"/>
</dbReference>
<dbReference type="PDB" id="5U0S">
    <property type="method" value="EM"/>
    <property type="resolution" value="7.80 A"/>
    <property type="chains" value="3=1-139"/>
</dbReference>
<dbReference type="PDBsum" id="5N9J"/>
<dbReference type="PDBsum" id="5U0P"/>
<dbReference type="PDBsum" id="5U0S"/>
<dbReference type="EMDB" id="EMD-8479"/>
<dbReference type="EMDB" id="EMD-8480"/>
<dbReference type="SMR" id="Q9USH1"/>
<dbReference type="BioGRID" id="276067">
    <property type="interactions" value="6"/>
</dbReference>
<dbReference type="FunCoup" id="Q9USH1">
    <property type="interactions" value="210"/>
</dbReference>
<dbReference type="IntAct" id="Q9USH1">
    <property type="interactions" value="2"/>
</dbReference>
<dbReference type="STRING" id="284812.Q9USH1"/>
<dbReference type="PaxDb" id="4896-SPCP31B10.03c.1"/>
<dbReference type="EnsemblFungi" id="SPCP31B10.03c.1">
    <property type="protein sequence ID" value="SPCP31B10.03c.1:pep"/>
    <property type="gene ID" value="SPCP31B10.03c"/>
</dbReference>
<dbReference type="GeneID" id="2539504"/>
<dbReference type="KEGG" id="spo:2539504"/>
<dbReference type="PomBase" id="SPCP31B10.03c">
    <property type="gene designation" value="med31"/>
</dbReference>
<dbReference type="VEuPathDB" id="FungiDB:SPCP31B10.03c"/>
<dbReference type="eggNOG" id="KOG4086">
    <property type="taxonomic scope" value="Eukaryota"/>
</dbReference>
<dbReference type="HOGENOM" id="CLU_071681_3_1_1"/>
<dbReference type="InParanoid" id="Q9USH1"/>
<dbReference type="OMA" id="YWSRPPY"/>
<dbReference type="PhylomeDB" id="Q9USH1"/>
<dbReference type="PRO" id="PR:Q9USH1"/>
<dbReference type="Proteomes" id="UP000002485">
    <property type="component" value="Chromosome III"/>
</dbReference>
<dbReference type="GO" id="GO:0070847">
    <property type="term" value="C:core mediator complex"/>
    <property type="evidence" value="ECO:0000318"/>
    <property type="project" value="GO_Central"/>
</dbReference>
<dbReference type="GO" id="GO:0016592">
    <property type="term" value="C:mediator complex"/>
    <property type="evidence" value="ECO:0000314"/>
    <property type="project" value="PomBase"/>
</dbReference>
<dbReference type="GO" id="GO:0005634">
    <property type="term" value="C:nucleus"/>
    <property type="evidence" value="ECO:0007005"/>
    <property type="project" value="PomBase"/>
</dbReference>
<dbReference type="GO" id="GO:0003713">
    <property type="term" value="F:transcription coactivator activity"/>
    <property type="evidence" value="ECO:0000304"/>
    <property type="project" value="PomBase"/>
</dbReference>
<dbReference type="GO" id="GO:0060261">
    <property type="term" value="P:positive regulation of transcription initiation by RNA polymerase II"/>
    <property type="evidence" value="ECO:0000269"/>
    <property type="project" value="PomBase"/>
</dbReference>
<dbReference type="GO" id="GO:0006357">
    <property type="term" value="P:regulation of transcription by RNA polymerase II"/>
    <property type="evidence" value="ECO:0000318"/>
    <property type="project" value="GO_Central"/>
</dbReference>
<dbReference type="FunFam" id="1.10.10.1340:FF:000001">
    <property type="entry name" value="Mediator of RNA polymerase II transcription subunit 31"/>
    <property type="match status" value="1"/>
</dbReference>
<dbReference type="Gene3D" id="1.10.10.1340">
    <property type="entry name" value="Mediator of RNA polymerase II, submodule Med31 (Soh1)"/>
    <property type="match status" value="1"/>
</dbReference>
<dbReference type="InterPro" id="IPR038089">
    <property type="entry name" value="Med31_sf"/>
</dbReference>
<dbReference type="InterPro" id="IPR008831">
    <property type="entry name" value="Mediator_Med31"/>
</dbReference>
<dbReference type="PANTHER" id="PTHR13186">
    <property type="entry name" value="MEDIATOR OF RNA POLYMERASE II TRANSCRIPTION SUBUNIT 31"/>
    <property type="match status" value="1"/>
</dbReference>
<dbReference type="Pfam" id="PF05669">
    <property type="entry name" value="Med31"/>
    <property type="match status" value="1"/>
</dbReference>
<reference key="1">
    <citation type="journal article" date="2002" name="Mol. Genet. Genomics">
        <title>The Schizosaccharomyces pombe genes sep10 and sep11 encode putative general transcriptional regulators involved in multiple cellular processes.</title>
        <authorList>
            <person name="Szilagyi Z."/>
            <person name="Grallert A."/>
            <person name="Nemeth N."/>
            <person name="Sipiczki M."/>
        </authorList>
    </citation>
    <scope>NUCLEOTIDE SEQUENCE [GENOMIC DNA]</scope>
</reference>
<reference key="2">
    <citation type="journal article" date="2002" name="Nature">
        <title>The genome sequence of Schizosaccharomyces pombe.</title>
        <authorList>
            <person name="Wood V."/>
            <person name="Gwilliam R."/>
            <person name="Rajandream M.A."/>
            <person name="Lyne M.H."/>
            <person name="Lyne R."/>
            <person name="Stewart A."/>
            <person name="Sgouros J.G."/>
            <person name="Peat N."/>
            <person name="Hayles J."/>
            <person name="Baker S.G."/>
            <person name="Basham D."/>
            <person name="Bowman S."/>
            <person name="Brooks K."/>
            <person name="Brown D."/>
            <person name="Brown S."/>
            <person name="Chillingworth T."/>
            <person name="Churcher C.M."/>
            <person name="Collins M."/>
            <person name="Connor R."/>
            <person name="Cronin A."/>
            <person name="Davis P."/>
            <person name="Feltwell T."/>
            <person name="Fraser A."/>
            <person name="Gentles S."/>
            <person name="Goble A."/>
            <person name="Hamlin N."/>
            <person name="Harris D.E."/>
            <person name="Hidalgo J."/>
            <person name="Hodgson G."/>
            <person name="Holroyd S."/>
            <person name="Hornsby T."/>
            <person name="Howarth S."/>
            <person name="Huckle E.J."/>
            <person name="Hunt S."/>
            <person name="Jagels K."/>
            <person name="James K.D."/>
            <person name="Jones L."/>
            <person name="Jones M."/>
            <person name="Leather S."/>
            <person name="McDonald S."/>
            <person name="McLean J."/>
            <person name="Mooney P."/>
            <person name="Moule S."/>
            <person name="Mungall K.L."/>
            <person name="Murphy L.D."/>
            <person name="Niblett D."/>
            <person name="Odell C."/>
            <person name="Oliver K."/>
            <person name="O'Neil S."/>
            <person name="Pearson D."/>
            <person name="Quail M.A."/>
            <person name="Rabbinowitsch E."/>
            <person name="Rutherford K.M."/>
            <person name="Rutter S."/>
            <person name="Saunders D."/>
            <person name="Seeger K."/>
            <person name="Sharp S."/>
            <person name="Skelton J."/>
            <person name="Simmonds M.N."/>
            <person name="Squares R."/>
            <person name="Squares S."/>
            <person name="Stevens K."/>
            <person name="Taylor K."/>
            <person name="Taylor R.G."/>
            <person name="Tivey A."/>
            <person name="Walsh S.V."/>
            <person name="Warren T."/>
            <person name="Whitehead S."/>
            <person name="Woodward J.R."/>
            <person name="Volckaert G."/>
            <person name="Aert R."/>
            <person name="Robben J."/>
            <person name="Grymonprez B."/>
            <person name="Weltjens I."/>
            <person name="Vanstreels E."/>
            <person name="Rieger M."/>
            <person name="Schaefer M."/>
            <person name="Mueller-Auer S."/>
            <person name="Gabel C."/>
            <person name="Fuchs M."/>
            <person name="Duesterhoeft A."/>
            <person name="Fritzc C."/>
            <person name="Holzer E."/>
            <person name="Moestl D."/>
            <person name="Hilbert H."/>
            <person name="Borzym K."/>
            <person name="Langer I."/>
            <person name="Beck A."/>
            <person name="Lehrach H."/>
            <person name="Reinhardt R."/>
            <person name="Pohl T.M."/>
            <person name="Eger P."/>
            <person name="Zimmermann W."/>
            <person name="Wedler H."/>
            <person name="Wambutt R."/>
            <person name="Purnelle B."/>
            <person name="Goffeau A."/>
            <person name="Cadieu E."/>
            <person name="Dreano S."/>
            <person name="Gloux S."/>
            <person name="Lelaure V."/>
            <person name="Mottier S."/>
            <person name="Galibert F."/>
            <person name="Aves S.J."/>
            <person name="Xiang Z."/>
            <person name="Hunt C."/>
            <person name="Moore K."/>
            <person name="Hurst S.M."/>
            <person name="Lucas M."/>
            <person name="Rochet M."/>
            <person name="Gaillardin C."/>
            <person name="Tallada V.A."/>
            <person name="Garzon A."/>
            <person name="Thode G."/>
            <person name="Daga R.R."/>
            <person name="Cruzado L."/>
            <person name="Jimenez J."/>
            <person name="Sanchez M."/>
            <person name="del Rey F."/>
            <person name="Benito J."/>
            <person name="Dominguez A."/>
            <person name="Revuelta J.L."/>
            <person name="Moreno S."/>
            <person name="Armstrong J."/>
            <person name="Forsburg S.L."/>
            <person name="Cerutti L."/>
            <person name="Lowe T."/>
            <person name="McCombie W.R."/>
            <person name="Paulsen I."/>
            <person name="Potashkin J."/>
            <person name="Shpakovski G.V."/>
            <person name="Ussery D."/>
            <person name="Barrell B.G."/>
            <person name="Nurse P."/>
        </authorList>
    </citation>
    <scope>NUCLEOTIDE SEQUENCE [LARGE SCALE GENOMIC DNA]</scope>
    <source>
        <strain>972 / ATCC 24843</strain>
    </source>
</reference>
<comment type="function">
    <text evidence="1">Component of the Mediator complex, a coactivator involved in the regulated transcription of nearly all RNA polymerase II-dependent genes. Mediator functions as a bridge to convey information from gene-specific regulatory proteins to the basal RNA polymerase II transcription machinery. Mediator is recruited to promoters by direct interactions with regulatory proteins and serves as a scaffold for the assembly of a functional preinitiation complex with RNA polymerase II and the general transcription factors (By similarity).</text>
</comment>
<comment type="subunit">
    <text evidence="1">Component of the Mediator complex.</text>
</comment>
<comment type="subcellular location">
    <subcellularLocation>
        <location evidence="1">Nucleus</location>
    </subcellularLocation>
</comment>
<comment type="similarity">
    <text evidence="3">Belongs to the Mediator complex subunit 31 family.</text>
</comment>
<gene>
    <name type="primary">med31</name>
    <name type="synonym">sep10</name>
    <name type="ORF">SPCP31B10.03c</name>
</gene>
<evidence type="ECO:0000250" key="1"/>
<evidence type="ECO:0000256" key="2">
    <source>
        <dbReference type="SAM" id="MobiDB-lite"/>
    </source>
</evidence>
<evidence type="ECO:0000305" key="3"/>
<evidence type="ECO:0007829" key="4">
    <source>
        <dbReference type="PDB" id="5N9J"/>
    </source>
</evidence>